<accession>Q07663</accession>
<keyword id="KW-0027">Amidation</keyword>
<keyword id="KW-0165">Cleavage on pair of basic residues</keyword>
<keyword id="KW-1015">Disulfide bond</keyword>
<keyword id="KW-0372">Hormone</keyword>
<keyword id="KW-0964">Secreted</keyword>
<keyword id="KW-0732">Signal</keyword>
<comment type="function">
    <text>Isotocin causes contraction of smooth muscles.</text>
</comment>
<comment type="subcellular location">
    <subcellularLocation>
        <location>Secreted</location>
    </subcellularLocation>
</comment>
<comment type="PTM">
    <text evidence="1">Seven disulfide bonds are present in neurophysin.</text>
</comment>
<comment type="similarity">
    <text evidence="3">Belongs to the vasopressin/oxytocin family.</text>
</comment>
<comment type="sequence caution" evidence="3">
    <conflict type="erroneous initiation">
        <sequence resource="EMBL-CDS" id="AAC60744"/>
    </conflict>
</comment>
<comment type="sequence caution" evidence="3">
    <conflict type="erroneous initiation">
        <sequence resource="EMBL-CDS" id="BAA01738"/>
    </conflict>
</comment>
<protein>
    <recommendedName>
        <fullName>Isotocin-neurophysin IT 1</fullName>
    </recommendedName>
    <component>
        <recommendedName>
            <fullName>Isotocin</fullName>
            <shortName>IT</shortName>
        </recommendedName>
    </component>
    <component>
        <recommendedName>
            <fullName>Neurophysin IT 1</fullName>
        </recommendedName>
    </component>
</protein>
<organism>
    <name type="scientific">Oncorhynchus masou</name>
    <name type="common">Cherry salmon</name>
    <name type="synonym">Masu salmon</name>
    <dbReference type="NCBI Taxonomy" id="8020"/>
    <lineage>
        <taxon>Eukaryota</taxon>
        <taxon>Metazoa</taxon>
        <taxon>Chordata</taxon>
        <taxon>Craniata</taxon>
        <taxon>Vertebrata</taxon>
        <taxon>Euteleostomi</taxon>
        <taxon>Actinopterygii</taxon>
        <taxon>Neopterygii</taxon>
        <taxon>Teleostei</taxon>
        <taxon>Protacanthopterygii</taxon>
        <taxon>Salmoniformes</taxon>
        <taxon>Salmonidae</taxon>
        <taxon>Salmoninae</taxon>
        <taxon>Oncorhynchus</taxon>
    </lineage>
</organism>
<name>NEU1_ONCMA</name>
<dbReference type="EMBL" id="D10944">
    <property type="protein sequence ID" value="BAA01738.1"/>
    <property type="status" value="ALT_INIT"/>
    <property type="molecule type" value="mRNA"/>
</dbReference>
<dbReference type="EMBL" id="S58721">
    <property type="protein sequence ID" value="AAC60744.2"/>
    <property type="status" value="ALT_INIT"/>
    <property type="molecule type" value="mRNA"/>
</dbReference>
<dbReference type="SMR" id="Q07663"/>
<dbReference type="GO" id="GO:0005615">
    <property type="term" value="C:extracellular space"/>
    <property type="evidence" value="ECO:0007669"/>
    <property type="project" value="TreeGrafter"/>
</dbReference>
<dbReference type="GO" id="GO:0030141">
    <property type="term" value="C:secretory granule"/>
    <property type="evidence" value="ECO:0007669"/>
    <property type="project" value="TreeGrafter"/>
</dbReference>
<dbReference type="GO" id="GO:0005185">
    <property type="term" value="F:neurohypophyseal hormone activity"/>
    <property type="evidence" value="ECO:0007669"/>
    <property type="project" value="InterPro"/>
</dbReference>
<dbReference type="FunFam" id="2.60.9.10:FF:000001">
    <property type="entry name" value="oxytocin-neurophysin 1"/>
    <property type="match status" value="1"/>
</dbReference>
<dbReference type="Gene3D" id="2.60.9.10">
    <property type="entry name" value="Neurohypophysial hormone domain"/>
    <property type="match status" value="1"/>
</dbReference>
<dbReference type="InterPro" id="IPR000981">
    <property type="entry name" value="Neurhyp_horm"/>
</dbReference>
<dbReference type="InterPro" id="IPR036387">
    <property type="entry name" value="Neurhyp_horm_dom_sf"/>
</dbReference>
<dbReference type="InterPro" id="IPR022423">
    <property type="entry name" value="Neurohypophysial_hormone_CS"/>
</dbReference>
<dbReference type="PANTHER" id="PTHR11681:SF5">
    <property type="entry name" value="ISOTOCIN"/>
    <property type="match status" value="1"/>
</dbReference>
<dbReference type="PANTHER" id="PTHR11681">
    <property type="entry name" value="NEUROPHYSIN"/>
    <property type="match status" value="1"/>
</dbReference>
<dbReference type="Pfam" id="PF00184">
    <property type="entry name" value="Hormone_5"/>
    <property type="match status" value="1"/>
</dbReference>
<dbReference type="PIRSF" id="PIRSF001815">
    <property type="entry name" value="Nonapeptide_hormone_precursor"/>
    <property type="match status" value="1"/>
</dbReference>
<dbReference type="PRINTS" id="PR00831">
    <property type="entry name" value="NEUROPHYSIN"/>
</dbReference>
<dbReference type="SMART" id="SM00003">
    <property type="entry name" value="NH"/>
    <property type="match status" value="1"/>
</dbReference>
<dbReference type="SUPFAM" id="SSF49606">
    <property type="entry name" value="Neurophysin II"/>
    <property type="match status" value="1"/>
</dbReference>
<dbReference type="PROSITE" id="PS00264">
    <property type="entry name" value="NEUROHYPOPHYS_HORM"/>
    <property type="match status" value="1"/>
</dbReference>
<sequence>MFGTSVSALCLLFLLSVCTACYISNCPIGGKRSALAFPSRKCMSCGPGDRGRCFGPNICCGEGMGCYVGSPEAAGCVEENYLPSPCEVGGRVCGSEEGRCAAPGICCDVEGCSIDQSCTEEDEAEYISQSVSSSHGHDLLMKLLNMISHTPPHRVHK</sequence>
<feature type="signal peptide" evidence="1">
    <location>
        <begin position="1"/>
        <end position="20"/>
    </location>
</feature>
<feature type="peptide" id="PRO_0000020560" description="Isotocin">
    <location>
        <begin position="21"/>
        <end position="29"/>
    </location>
</feature>
<feature type="chain" id="PRO_0000020561" description="Neurophysin IT 1">
    <location>
        <begin position="33"/>
        <end position="157"/>
    </location>
</feature>
<feature type="modified residue" description="Glycine amide" evidence="1">
    <location>
        <position position="29"/>
    </location>
</feature>
<feature type="disulfide bond">
    <location>
        <begin position="21"/>
        <end position="26"/>
    </location>
</feature>
<feature type="disulfide bond" evidence="2">
    <location>
        <begin position="42"/>
        <end position="86"/>
    </location>
</feature>
<feature type="disulfide bond" evidence="2">
    <location>
        <begin position="45"/>
        <end position="59"/>
    </location>
</feature>
<feature type="disulfide bond" evidence="2">
    <location>
        <begin position="53"/>
        <end position="76"/>
    </location>
</feature>
<feature type="disulfide bond" evidence="2">
    <location>
        <begin position="60"/>
        <end position="66"/>
    </location>
</feature>
<feature type="disulfide bond" evidence="2">
    <location>
        <begin position="93"/>
        <end position="106"/>
    </location>
</feature>
<feature type="disulfide bond" evidence="2">
    <location>
        <begin position="100"/>
        <end position="118"/>
    </location>
</feature>
<feature type="disulfide bond" evidence="2">
    <location>
        <begin position="107"/>
        <end position="112"/>
    </location>
</feature>
<evidence type="ECO:0000250" key="1"/>
<evidence type="ECO:0000250" key="2">
    <source>
        <dbReference type="UniProtKB" id="P01175"/>
    </source>
</evidence>
<evidence type="ECO:0000305" key="3"/>
<reference key="1">
    <citation type="journal article" date="1992" name="Zool. Sci.">
        <title>Cloning and sequence analyses of vasotocin and isotocin precursor cDNAs in the masu salmon, Oncorhynchus masou: evolution of neurohypophysial hormone precursors.</title>
        <authorList>
            <person name="Suzuki M."/>
            <person name="Hyodo S."/>
            <person name="Urano A."/>
        </authorList>
    </citation>
    <scope>NUCLEOTIDE SEQUENCE [MRNA]</scope>
    <source>
        <tissue>Hypothalamus</tissue>
    </source>
</reference>
<proteinExistence type="evidence at protein level"/>